<organism>
    <name type="scientific">Rhodopirellula baltica (strain DSM 10527 / NCIMB 13988 / SH1)</name>
    <dbReference type="NCBI Taxonomy" id="243090"/>
    <lineage>
        <taxon>Bacteria</taxon>
        <taxon>Pseudomonadati</taxon>
        <taxon>Planctomycetota</taxon>
        <taxon>Planctomycetia</taxon>
        <taxon>Pirellulales</taxon>
        <taxon>Pirellulaceae</taxon>
        <taxon>Rhodopirellula</taxon>
    </lineage>
</organism>
<gene>
    <name evidence="1" type="primary">fusA</name>
    <name type="ordered locus">RB5434</name>
</gene>
<comment type="function">
    <text evidence="1">Catalyzes the GTP-dependent ribosomal translocation step during translation elongation. During this step, the ribosome changes from the pre-translocational (PRE) to the post-translocational (POST) state as the newly formed A-site-bound peptidyl-tRNA and P-site-bound deacylated tRNA move to the P and E sites, respectively. Catalyzes the coordinated movement of the two tRNA molecules, the mRNA and conformational changes in the ribosome.</text>
</comment>
<comment type="subcellular location">
    <subcellularLocation>
        <location evidence="1">Cytoplasm</location>
    </subcellularLocation>
</comment>
<comment type="similarity">
    <text evidence="1">Belongs to the TRAFAC class translation factor GTPase superfamily. Classic translation factor GTPase family. EF-G/EF-2 subfamily.</text>
</comment>
<sequence length="695" mass="77789">MNLEKVRNIGISAHIDSGKTTLSERILFYSGRIHKIEDVRGGGDGATMDHMELEKERGITITSAATSVTHNGYHINLIDTPGHVDFTVEVERSLRVLDGAVLVLCSVGGVQSQSITVDRQMKRYQIPRLAFINKMDRTGANPRRVVEQLREKLGADAFLAQIPIGAEENFRGVVDLIEMVAYTFEGDQGEKVVTGEIPADLKDEAEEARVAMLDSLSNYSDEVMELLLSEEEVSKDMIYRVMREAVLNGATPVYMGSAYKNKGVQPLLNAVTQYLPSPLDREIYGRDPSDEEKKIELSPDPDKPFVGMAFKIVEDPFGQLTFMRIYQGTIKKGEAYTNQRSQKKERFSRIVRMHSEKRDEIDEAGPGDIIAVMGIDCASGDTYCSERDYATLESMYVPEPVIKIAVNPLNRGDGDKMSKALQRFRKEDPTFSVYTDEETNEILISGMGELHLEIYIERIRREYGVEIEVGAPKVSYRESPTREVEFNYKHKKQTGGSGQYAHIVGKLIPIESESEDSFEFEEKVVGGRIPKQYIPAVEKGFRDILGKGPIADYPVVGTRIELLDGSYHDVDSSEKAFYTAAQGCFREYFKQAAPKLLEPIMSVEIEVPEEFQGTVTGDVIRRRGLMTSNDTNEGMTVILAEVPLAETFGYATDLRSMTQGQGTFTMELAAYRQTPSNIQEEIIAERKKDELAGAR</sequence>
<evidence type="ECO:0000255" key="1">
    <source>
        <dbReference type="HAMAP-Rule" id="MF_00054"/>
    </source>
</evidence>
<name>EFG_RHOBA</name>
<proteinExistence type="inferred from homology"/>
<protein>
    <recommendedName>
        <fullName evidence="1">Elongation factor G</fullName>
        <shortName evidence="1">EF-G</shortName>
    </recommendedName>
</protein>
<dbReference type="EMBL" id="BX294142">
    <property type="protein sequence ID" value="CAD74235.1"/>
    <property type="molecule type" value="Genomic_DNA"/>
</dbReference>
<dbReference type="RefSeq" id="NP_866696.1">
    <property type="nucleotide sequence ID" value="NC_005027.1"/>
</dbReference>
<dbReference type="RefSeq" id="WP_011120445.1">
    <property type="nucleotide sequence ID" value="NC_005027.1"/>
</dbReference>
<dbReference type="SMR" id="Q7URV2"/>
<dbReference type="FunCoup" id="Q7URV2">
    <property type="interactions" value="562"/>
</dbReference>
<dbReference type="STRING" id="243090.RB5434"/>
<dbReference type="EnsemblBacteria" id="CAD74235">
    <property type="protein sequence ID" value="CAD74235"/>
    <property type="gene ID" value="RB5434"/>
</dbReference>
<dbReference type="KEGG" id="rba:RB5434"/>
<dbReference type="PATRIC" id="fig|243090.15.peg.2610"/>
<dbReference type="eggNOG" id="COG0480">
    <property type="taxonomic scope" value="Bacteria"/>
</dbReference>
<dbReference type="HOGENOM" id="CLU_002794_4_1_0"/>
<dbReference type="InParanoid" id="Q7URV2"/>
<dbReference type="OrthoDB" id="9804431at2"/>
<dbReference type="Proteomes" id="UP000001025">
    <property type="component" value="Chromosome"/>
</dbReference>
<dbReference type="GO" id="GO:0005737">
    <property type="term" value="C:cytoplasm"/>
    <property type="evidence" value="ECO:0007669"/>
    <property type="project" value="UniProtKB-SubCell"/>
</dbReference>
<dbReference type="GO" id="GO:0005525">
    <property type="term" value="F:GTP binding"/>
    <property type="evidence" value="ECO:0007669"/>
    <property type="project" value="UniProtKB-UniRule"/>
</dbReference>
<dbReference type="GO" id="GO:0003924">
    <property type="term" value="F:GTPase activity"/>
    <property type="evidence" value="ECO:0000318"/>
    <property type="project" value="GO_Central"/>
</dbReference>
<dbReference type="GO" id="GO:0003746">
    <property type="term" value="F:translation elongation factor activity"/>
    <property type="evidence" value="ECO:0000318"/>
    <property type="project" value="GO_Central"/>
</dbReference>
<dbReference type="CDD" id="cd01886">
    <property type="entry name" value="EF-G"/>
    <property type="match status" value="1"/>
</dbReference>
<dbReference type="CDD" id="cd16262">
    <property type="entry name" value="EFG_III"/>
    <property type="match status" value="1"/>
</dbReference>
<dbReference type="CDD" id="cd01434">
    <property type="entry name" value="EFG_mtEFG1_IV"/>
    <property type="match status" value="1"/>
</dbReference>
<dbReference type="CDD" id="cd03713">
    <property type="entry name" value="EFG_mtEFG_C"/>
    <property type="match status" value="1"/>
</dbReference>
<dbReference type="CDD" id="cd04091">
    <property type="entry name" value="mtEFG1_II_like"/>
    <property type="match status" value="1"/>
</dbReference>
<dbReference type="FunFam" id="3.30.230.10:FF:000003">
    <property type="entry name" value="Elongation factor G"/>
    <property type="match status" value="1"/>
</dbReference>
<dbReference type="FunFam" id="3.30.70.240:FF:000001">
    <property type="entry name" value="Elongation factor G"/>
    <property type="match status" value="1"/>
</dbReference>
<dbReference type="FunFam" id="3.30.70.870:FF:000001">
    <property type="entry name" value="Elongation factor G"/>
    <property type="match status" value="1"/>
</dbReference>
<dbReference type="FunFam" id="3.40.50.300:FF:000029">
    <property type="entry name" value="Elongation factor G"/>
    <property type="match status" value="1"/>
</dbReference>
<dbReference type="FunFam" id="2.40.30.10:FF:000022">
    <property type="entry name" value="Elongation factor G, mitochondrial"/>
    <property type="match status" value="1"/>
</dbReference>
<dbReference type="Gene3D" id="3.30.230.10">
    <property type="match status" value="1"/>
</dbReference>
<dbReference type="Gene3D" id="3.30.70.240">
    <property type="match status" value="1"/>
</dbReference>
<dbReference type="Gene3D" id="3.30.70.870">
    <property type="entry name" value="Elongation Factor G (Translational Gtpase), domain 3"/>
    <property type="match status" value="1"/>
</dbReference>
<dbReference type="Gene3D" id="3.40.50.300">
    <property type="entry name" value="P-loop containing nucleotide triphosphate hydrolases"/>
    <property type="match status" value="1"/>
</dbReference>
<dbReference type="Gene3D" id="2.40.30.10">
    <property type="entry name" value="Translation factors"/>
    <property type="match status" value="1"/>
</dbReference>
<dbReference type="HAMAP" id="MF_00054_B">
    <property type="entry name" value="EF_G_EF_2_B"/>
    <property type="match status" value="1"/>
</dbReference>
<dbReference type="InterPro" id="IPR053905">
    <property type="entry name" value="EF-G-like_DII"/>
</dbReference>
<dbReference type="InterPro" id="IPR041095">
    <property type="entry name" value="EFG_II"/>
</dbReference>
<dbReference type="InterPro" id="IPR009022">
    <property type="entry name" value="EFG_III"/>
</dbReference>
<dbReference type="InterPro" id="IPR035647">
    <property type="entry name" value="EFG_III/V"/>
</dbReference>
<dbReference type="InterPro" id="IPR047872">
    <property type="entry name" value="EFG_IV"/>
</dbReference>
<dbReference type="InterPro" id="IPR035649">
    <property type="entry name" value="EFG_V"/>
</dbReference>
<dbReference type="InterPro" id="IPR000640">
    <property type="entry name" value="EFG_V-like"/>
</dbReference>
<dbReference type="InterPro" id="IPR027417">
    <property type="entry name" value="P-loop_NTPase"/>
</dbReference>
<dbReference type="InterPro" id="IPR020568">
    <property type="entry name" value="Ribosomal_Su5_D2-typ_SF"/>
</dbReference>
<dbReference type="InterPro" id="IPR014721">
    <property type="entry name" value="Ribsml_uS5_D2-typ_fold_subgr"/>
</dbReference>
<dbReference type="InterPro" id="IPR005225">
    <property type="entry name" value="Small_GTP-bd"/>
</dbReference>
<dbReference type="InterPro" id="IPR000795">
    <property type="entry name" value="T_Tr_GTP-bd_dom"/>
</dbReference>
<dbReference type="InterPro" id="IPR009000">
    <property type="entry name" value="Transl_B-barrel_sf"/>
</dbReference>
<dbReference type="InterPro" id="IPR004540">
    <property type="entry name" value="Transl_elong_EFG/EF2"/>
</dbReference>
<dbReference type="InterPro" id="IPR005517">
    <property type="entry name" value="Transl_elong_EFG/EF2_IV"/>
</dbReference>
<dbReference type="NCBIfam" id="TIGR00484">
    <property type="entry name" value="EF-G"/>
    <property type="match status" value="1"/>
</dbReference>
<dbReference type="NCBIfam" id="NF009381">
    <property type="entry name" value="PRK12740.1-5"/>
    <property type="match status" value="1"/>
</dbReference>
<dbReference type="NCBIfam" id="TIGR00231">
    <property type="entry name" value="small_GTP"/>
    <property type="match status" value="1"/>
</dbReference>
<dbReference type="PANTHER" id="PTHR43636">
    <property type="entry name" value="ELONGATION FACTOR G, MITOCHONDRIAL"/>
    <property type="match status" value="1"/>
</dbReference>
<dbReference type="PANTHER" id="PTHR43636:SF2">
    <property type="entry name" value="ELONGATION FACTOR G, MITOCHONDRIAL"/>
    <property type="match status" value="1"/>
</dbReference>
<dbReference type="Pfam" id="PF22042">
    <property type="entry name" value="EF-G_D2"/>
    <property type="match status" value="1"/>
</dbReference>
<dbReference type="Pfam" id="PF00679">
    <property type="entry name" value="EFG_C"/>
    <property type="match status" value="1"/>
</dbReference>
<dbReference type="Pfam" id="PF14492">
    <property type="entry name" value="EFG_III"/>
    <property type="match status" value="1"/>
</dbReference>
<dbReference type="Pfam" id="PF03764">
    <property type="entry name" value="EFG_IV"/>
    <property type="match status" value="1"/>
</dbReference>
<dbReference type="Pfam" id="PF00009">
    <property type="entry name" value="GTP_EFTU"/>
    <property type="match status" value="1"/>
</dbReference>
<dbReference type="PRINTS" id="PR00315">
    <property type="entry name" value="ELONGATNFCT"/>
</dbReference>
<dbReference type="SMART" id="SM00838">
    <property type="entry name" value="EFG_C"/>
    <property type="match status" value="1"/>
</dbReference>
<dbReference type="SMART" id="SM00889">
    <property type="entry name" value="EFG_IV"/>
    <property type="match status" value="1"/>
</dbReference>
<dbReference type="SUPFAM" id="SSF54980">
    <property type="entry name" value="EF-G C-terminal domain-like"/>
    <property type="match status" value="2"/>
</dbReference>
<dbReference type="SUPFAM" id="SSF52540">
    <property type="entry name" value="P-loop containing nucleoside triphosphate hydrolases"/>
    <property type="match status" value="1"/>
</dbReference>
<dbReference type="SUPFAM" id="SSF54211">
    <property type="entry name" value="Ribosomal protein S5 domain 2-like"/>
    <property type="match status" value="1"/>
</dbReference>
<dbReference type="SUPFAM" id="SSF50447">
    <property type="entry name" value="Translation proteins"/>
    <property type="match status" value="1"/>
</dbReference>
<dbReference type="PROSITE" id="PS51722">
    <property type="entry name" value="G_TR_2"/>
    <property type="match status" value="1"/>
</dbReference>
<feature type="chain" id="PRO_0000091193" description="Elongation factor G">
    <location>
        <begin position="1"/>
        <end position="695"/>
    </location>
</feature>
<feature type="domain" description="tr-type G">
    <location>
        <begin position="4"/>
        <end position="279"/>
    </location>
</feature>
<feature type="binding site" evidence="1">
    <location>
        <begin position="13"/>
        <end position="20"/>
    </location>
    <ligand>
        <name>GTP</name>
        <dbReference type="ChEBI" id="CHEBI:37565"/>
    </ligand>
</feature>
<feature type="binding site" evidence="1">
    <location>
        <begin position="79"/>
        <end position="83"/>
    </location>
    <ligand>
        <name>GTP</name>
        <dbReference type="ChEBI" id="CHEBI:37565"/>
    </ligand>
</feature>
<feature type="binding site" evidence="1">
    <location>
        <begin position="133"/>
        <end position="136"/>
    </location>
    <ligand>
        <name>GTP</name>
        <dbReference type="ChEBI" id="CHEBI:37565"/>
    </ligand>
</feature>
<keyword id="KW-0963">Cytoplasm</keyword>
<keyword id="KW-0251">Elongation factor</keyword>
<keyword id="KW-0342">GTP-binding</keyword>
<keyword id="KW-0547">Nucleotide-binding</keyword>
<keyword id="KW-0648">Protein biosynthesis</keyword>
<keyword id="KW-1185">Reference proteome</keyword>
<accession>Q7URV2</accession>
<reference key="1">
    <citation type="journal article" date="2003" name="Proc. Natl. Acad. Sci. U.S.A.">
        <title>Complete genome sequence of the marine planctomycete Pirellula sp. strain 1.</title>
        <authorList>
            <person name="Gloeckner F.O."/>
            <person name="Kube M."/>
            <person name="Bauer M."/>
            <person name="Teeling H."/>
            <person name="Lombardot T."/>
            <person name="Ludwig W."/>
            <person name="Gade D."/>
            <person name="Beck A."/>
            <person name="Borzym K."/>
            <person name="Heitmann K."/>
            <person name="Rabus R."/>
            <person name="Schlesner H."/>
            <person name="Amann R."/>
            <person name="Reinhardt R."/>
        </authorList>
    </citation>
    <scope>NUCLEOTIDE SEQUENCE [LARGE SCALE GENOMIC DNA]</scope>
    <source>
        <strain>DSM 10527 / NCIMB 13988 / SH1</strain>
    </source>
</reference>